<accession>Q5NIG0</accession>
<organism>
    <name type="scientific">Francisella tularensis subsp. tularensis (strain SCHU S4 / Schu 4)</name>
    <dbReference type="NCBI Taxonomy" id="177416"/>
    <lineage>
        <taxon>Bacteria</taxon>
        <taxon>Pseudomonadati</taxon>
        <taxon>Pseudomonadota</taxon>
        <taxon>Gammaproteobacteria</taxon>
        <taxon>Thiotrichales</taxon>
        <taxon>Francisellaceae</taxon>
        <taxon>Francisella</taxon>
    </lineage>
</organism>
<feature type="chain" id="PRO_0000267534" description="Type III pantothenate kinase 1">
    <location>
        <begin position="1"/>
        <end position="258"/>
    </location>
</feature>
<feature type="active site" description="Proton acceptor" evidence="1">
    <location>
        <position position="109"/>
    </location>
</feature>
<feature type="binding site" evidence="1">
    <location>
        <begin position="6"/>
        <end position="13"/>
    </location>
    <ligand>
        <name>ATP</name>
        <dbReference type="ChEBI" id="CHEBI:30616"/>
    </ligand>
</feature>
<feature type="binding site" evidence="1">
    <location>
        <begin position="107"/>
        <end position="110"/>
    </location>
    <ligand>
        <name>substrate</name>
    </ligand>
</feature>
<feature type="binding site" evidence="1">
    <location>
        <position position="130"/>
    </location>
    <ligand>
        <name>K(+)</name>
        <dbReference type="ChEBI" id="CHEBI:29103"/>
    </ligand>
</feature>
<feature type="binding site" evidence="1">
    <location>
        <position position="133"/>
    </location>
    <ligand>
        <name>ATP</name>
        <dbReference type="ChEBI" id="CHEBI:30616"/>
    </ligand>
</feature>
<feature type="binding site" evidence="1">
    <location>
        <position position="185"/>
    </location>
    <ligand>
        <name>substrate</name>
    </ligand>
</feature>
<sequence>MLLVMDMGNSHIHIGVFDGDRIVSQIRYATSSVDSTSDQMGVFLRQALRENSVDLGKIDGCGISSVVPHLNYSLGSAVIKYFNIKPFFISMDTTDLDMSAVEAHQVGADRIASCISAIADHPNKDLLIIDLGTATTFDLVTKDKKYLSGSIMPGVKLSLNALCQGASQLSSVTIVKPEVAIGYDTKTNIRSGLYYGHLGALKELKRRSVEEFGSPVYTIATGGFAGLFKEEDIFNEISPDLILRGIRIAFLENNKKGV</sequence>
<protein>
    <recommendedName>
        <fullName evidence="1">Type III pantothenate kinase 1</fullName>
        <ecNumber evidence="1">2.7.1.33</ecNumber>
    </recommendedName>
    <alternativeName>
        <fullName evidence="1">PanK-III 1</fullName>
    </alternativeName>
    <alternativeName>
        <fullName evidence="1">Pantothenic acid kinase 1</fullName>
    </alternativeName>
</protein>
<keyword id="KW-0067">ATP-binding</keyword>
<keyword id="KW-0173">Coenzyme A biosynthesis</keyword>
<keyword id="KW-0963">Cytoplasm</keyword>
<keyword id="KW-0418">Kinase</keyword>
<keyword id="KW-0479">Metal-binding</keyword>
<keyword id="KW-0547">Nucleotide-binding</keyword>
<keyword id="KW-0630">Potassium</keyword>
<keyword id="KW-1185">Reference proteome</keyword>
<keyword id="KW-0808">Transferase</keyword>
<dbReference type="EC" id="2.7.1.33" evidence="1"/>
<dbReference type="EMBL" id="AJ749949">
    <property type="protein sequence ID" value="CAG44745.1"/>
    <property type="molecule type" value="Genomic_DNA"/>
</dbReference>
<dbReference type="RefSeq" id="WP_003019854.1">
    <property type="nucleotide sequence ID" value="NZ_CP010290.1"/>
</dbReference>
<dbReference type="RefSeq" id="YP_169182.1">
    <property type="nucleotide sequence ID" value="NC_006570.2"/>
</dbReference>
<dbReference type="SMR" id="Q5NIG0"/>
<dbReference type="STRING" id="177416.FTT_0112"/>
<dbReference type="DNASU" id="3192123"/>
<dbReference type="EnsemblBacteria" id="CAG44745">
    <property type="protein sequence ID" value="CAG44745"/>
    <property type="gene ID" value="FTT_0112"/>
</dbReference>
<dbReference type="KEGG" id="ftu:FTT_0112"/>
<dbReference type="eggNOG" id="COG1521">
    <property type="taxonomic scope" value="Bacteria"/>
</dbReference>
<dbReference type="OrthoDB" id="9781305at2"/>
<dbReference type="UniPathway" id="UPA00241">
    <property type="reaction ID" value="UER00352"/>
</dbReference>
<dbReference type="Proteomes" id="UP000001174">
    <property type="component" value="Chromosome"/>
</dbReference>
<dbReference type="GO" id="GO:0005737">
    <property type="term" value="C:cytoplasm"/>
    <property type="evidence" value="ECO:0007669"/>
    <property type="project" value="UniProtKB-SubCell"/>
</dbReference>
<dbReference type="GO" id="GO:0005524">
    <property type="term" value="F:ATP binding"/>
    <property type="evidence" value="ECO:0007669"/>
    <property type="project" value="UniProtKB-UniRule"/>
</dbReference>
<dbReference type="GO" id="GO:0046872">
    <property type="term" value="F:metal ion binding"/>
    <property type="evidence" value="ECO:0007669"/>
    <property type="project" value="UniProtKB-KW"/>
</dbReference>
<dbReference type="GO" id="GO:0004594">
    <property type="term" value="F:pantothenate kinase activity"/>
    <property type="evidence" value="ECO:0007669"/>
    <property type="project" value="UniProtKB-UniRule"/>
</dbReference>
<dbReference type="GO" id="GO:0015937">
    <property type="term" value="P:coenzyme A biosynthetic process"/>
    <property type="evidence" value="ECO:0007669"/>
    <property type="project" value="UniProtKB-UniRule"/>
</dbReference>
<dbReference type="CDD" id="cd24015">
    <property type="entry name" value="ASKHA_NBD_PanK-III"/>
    <property type="match status" value="1"/>
</dbReference>
<dbReference type="Gene3D" id="3.30.420.40">
    <property type="match status" value="2"/>
</dbReference>
<dbReference type="HAMAP" id="MF_01274">
    <property type="entry name" value="Pantothen_kinase_3"/>
    <property type="match status" value="1"/>
</dbReference>
<dbReference type="InterPro" id="IPR043129">
    <property type="entry name" value="ATPase_NBD"/>
</dbReference>
<dbReference type="InterPro" id="IPR004619">
    <property type="entry name" value="Type_III_PanK"/>
</dbReference>
<dbReference type="NCBIfam" id="TIGR00671">
    <property type="entry name" value="baf"/>
    <property type="match status" value="1"/>
</dbReference>
<dbReference type="NCBIfam" id="NF009855">
    <property type="entry name" value="PRK13321.1"/>
    <property type="match status" value="1"/>
</dbReference>
<dbReference type="NCBIfam" id="NF009861">
    <property type="entry name" value="PRK13324.1"/>
    <property type="match status" value="1"/>
</dbReference>
<dbReference type="PANTHER" id="PTHR34265">
    <property type="entry name" value="TYPE III PANTOTHENATE KINASE"/>
    <property type="match status" value="1"/>
</dbReference>
<dbReference type="PANTHER" id="PTHR34265:SF1">
    <property type="entry name" value="TYPE III PANTOTHENATE KINASE"/>
    <property type="match status" value="1"/>
</dbReference>
<dbReference type="Pfam" id="PF03309">
    <property type="entry name" value="Pan_kinase"/>
    <property type="match status" value="1"/>
</dbReference>
<dbReference type="SUPFAM" id="SSF53067">
    <property type="entry name" value="Actin-like ATPase domain"/>
    <property type="match status" value="2"/>
</dbReference>
<gene>
    <name evidence="1" type="primary">coaX1</name>
    <name type="ordered locus">FTT_0112</name>
</gene>
<reference key="1">
    <citation type="journal article" date="2005" name="Nat. Genet.">
        <title>The complete genome sequence of Francisella tularensis, the causative agent of tularemia.</title>
        <authorList>
            <person name="Larsson P."/>
            <person name="Oyston P.C.F."/>
            <person name="Chain P."/>
            <person name="Chu M.C."/>
            <person name="Duffield M."/>
            <person name="Fuxelius H.-H."/>
            <person name="Garcia E."/>
            <person name="Haelltorp G."/>
            <person name="Johansson D."/>
            <person name="Isherwood K.E."/>
            <person name="Karp P.D."/>
            <person name="Larsson E."/>
            <person name="Liu Y."/>
            <person name="Michell S."/>
            <person name="Prior J."/>
            <person name="Prior R."/>
            <person name="Malfatti S."/>
            <person name="Sjoestedt A."/>
            <person name="Svensson K."/>
            <person name="Thompson N."/>
            <person name="Vergez L."/>
            <person name="Wagg J.K."/>
            <person name="Wren B.W."/>
            <person name="Lindler L.E."/>
            <person name="Andersson S.G.E."/>
            <person name="Forsman M."/>
            <person name="Titball R.W."/>
        </authorList>
    </citation>
    <scope>NUCLEOTIDE SEQUENCE [LARGE SCALE GENOMIC DNA]</scope>
    <source>
        <strain>SCHU S4 / Schu 4</strain>
    </source>
</reference>
<name>COAX1_FRATT</name>
<proteinExistence type="inferred from homology"/>
<comment type="function">
    <text evidence="1">Catalyzes the phosphorylation of pantothenate (Pan), the first step in CoA biosynthesis.</text>
</comment>
<comment type="catalytic activity">
    <reaction evidence="1">
        <text>(R)-pantothenate + ATP = (R)-4'-phosphopantothenate + ADP + H(+)</text>
        <dbReference type="Rhea" id="RHEA:16373"/>
        <dbReference type="ChEBI" id="CHEBI:10986"/>
        <dbReference type="ChEBI" id="CHEBI:15378"/>
        <dbReference type="ChEBI" id="CHEBI:29032"/>
        <dbReference type="ChEBI" id="CHEBI:30616"/>
        <dbReference type="ChEBI" id="CHEBI:456216"/>
        <dbReference type="EC" id="2.7.1.33"/>
    </reaction>
</comment>
<comment type="cofactor">
    <cofactor evidence="1">
        <name>NH4(+)</name>
        <dbReference type="ChEBI" id="CHEBI:28938"/>
    </cofactor>
    <cofactor evidence="1">
        <name>K(+)</name>
        <dbReference type="ChEBI" id="CHEBI:29103"/>
    </cofactor>
    <text evidence="1">A monovalent cation. Ammonium or potassium.</text>
</comment>
<comment type="pathway">
    <text evidence="1">Cofactor biosynthesis; coenzyme A biosynthesis; CoA from (R)-pantothenate: step 1/5.</text>
</comment>
<comment type="subunit">
    <text evidence="1">Homodimer.</text>
</comment>
<comment type="subcellular location">
    <subcellularLocation>
        <location evidence="1">Cytoplasm</location>
    </subcellularLocation>
</comment>
<comment type="similarity">
    <text evidence="1">Belongs to the type III pantothenate kinase family.</text>
</comment>
<evidence type="ECO:0000255" key="1">
    <source>
        <dbReference type="HAMAP-Rule" id="MF_01274"/>
    </source>
</evidence>